<evidence type="ECO:0000255" key="1"/>
<evidence type="ECO:0000305" key="2"/>
<comment type="subcellular location">
    <subcellularLocation>
        <location evidence="2">Mitochondrion</location>
    </subcellularLocation>
</comment>
<comment type="similarity">
    <text evidence="2">Belongs to the PPR family. P subfamily.</text>
</comment>
<comment type="online information" name="Pentatricopeptide repeat proteins">
    <link uri="https://ppr.plantenergy.uwa.edu.au"/>
</comment>
<accession>Q84JR3</accession>
<dbReference type="EMBL" id="AL035527">
    <property type="status" value="NOT_ANNOTATED_CDS"/>
    <property type="molecule type" value="Genomic_DNA"/>
</dbReference>
<dbReference type="EMBL" id="CP002687">
    <property type="protein sequence ID" value="AEE84492.1"/>
    <property type="molecule type" value="Genomic_DNA"/>
</dbReference>
<dbReference type="EMBL" id="BT003959">
    <property type="protein sequence ID" value="AAO42004.1"/>
    <property type="molecule type" value="mRNA"/>
</dbReference>
<dbReference type="EMBL" id="BT005061">
    <property type="protein sequence ID" value="AAO50594.1"/>
    <property type="molecule type" value="mRNA"/>
</dbReference>
<dbReference type="RefSeq" id="NP_680735.1">
    <property type="nucleotide sequence ID" value="NM_148369.3"/>
</dbReference>
<dbReference type="SMR" id="Q84JR3"/>
<dbReference type="BioGRID" id="13547">
    <property type="interactions" value="2"/>
</dbReference>
<dbReference type="FunCoup" id="Q84JR3">
    <property type="interactions" value="712"/>
</dbReference>
<dbReference type="IntAct" id="Q84JR3">
    <property type="interactions" value="2"/>
</dbReference>
<dbReference type="PaxDb" id="3702-AT4G21705.1"/>
<dbReference type="ProteomicsDB" id="249234"/>
<dbReference type="EnsemblPlants" id="AT4G21705.1">
    <property type="protein sequence ID" value="AT4G21705.1"/>
    <property type="gene ID" value="AT4G21705"/>
</dbReference>
<dbReference type="GeneID" id="828258"/>
<dbReference type="Gramene" id="AT4G21705.1">
    <property type="protein sequence ID" value="AT4G21705.1"/>
    <property type="gene ID" value="AT4G21705"/>
</dbReference>
<dbReference type="KEGG" id="ath:AT4G21705"/>
<dbReference type="Araport" id="AT4G21705"/>
<dbReference type="TAIR" id="AT4G21705"/>
<dbReference type="eggNOG" id="KOG4197">
    <property type="taxonomic scope" value="Eukaryota"/>
</dbReference>
<dbReference type="HOGENOM" id="CLU_019802_3_0_1"/>
<dbReference type="InParanoid" id="Q84JR3"/>
<dbReference type="OMA" id="SKWMNET"/>
<dbReference type="OrthoDB" id="429961at2759"/>
<dbReference type="PhylomeDB" id="Q84JR3"/>
<dbReference type="PRO" id="PR:Q84JR3"/>
<dbReference type="Proteomes" id="UP000006548">
    <property type="component" value="Chromosome 4"/>
</dbReference>
<dbReference type="ExpressionAtlas" id="Q84JR3">
    <property type="expression patterns" value="baseline and differential"/>
</dbReference>
<dbReference type="GO" id="GO:0005739">
    <property type="term" value="C:mitochondrion"/>
    <property type="evidence" value="ECO:0007669"/>
    <property type="project" value="UniProtKB-SubCell"/>
</dbReference>
<dbReference type="GO" id="GO:0003729">
    <property type="term" value="F:mRNA binding"/>
    <property type="evidence" value="ECO:0007669"/>
    <property type="project" value="UniProtKB-ARBA"/>
</dbReference>
<dbReference type="FunFam" id="1.25.40.10:FF:002127">
    <property type="entry name" value="Pentatricopeptide repeat-containing protein At4g21705, mitochondrial"/>
    <property type="match status" value="1"/>
</dbReference>
<dbReference type="FunFam" id="1.25.40.10:FF:001627">
    <property type="entry name" value="Pentatricopeptide repeat-containing protein, mitochondrial"/>
    <property type="match status" value="1"/>
</dbReference>
<dbReference type="Gene3D" id="1.25.40.10">
    <property type="entry name" value="Tetratricopeptide repeat domain"/>
    <property type="match status" value="2"/>
</dbReference>
<dbReference type="InterPro" id="IPR002885">
    <property type="entry name" value="Pentatricopeptide_rpt"/>
</dbReference>
<dbReference type="InterPro" id="IPR011990">
    <property type="entry name" value="TPR-like_helical_dom_sf"/>
</dbReference>
<dbReference type="NCBIfam" id="TIGR00756">
    <property type="entry name" value="PPR"/>
    <property type="match status" value="2"/>
</dbReference>
<dbReference type="PANTHER" id="PTHR45717:SF20">
    <property type="entry name" value="OS07G0598500 PROTEIN"/>
    <property type="match status" value="1"/>
</dbReference>
<dbReference type="PANTHER" id="PTHR45717">
    <property type="entry name" value="OS12G0527900 PROTEIN"/>
    <property type="match status" value="1"/>
</dbReference>
<dbReference type="Pfam" id="PF01535">
    <property type="entry name" value="PPR"/>
    <property type="match status" value="2"/>
</dbReference>
<dbReference type="Pfam" id="PF13041">
    <property type="entry name" value="PPR_2"/>
    <property type="match status" value="1"/>
</dbReference>
<dbReference type="SUPFAM" id="SSF48452">
    <property type="entry name" value="TPR-like"/>
    <property type="match status" value="1"/>
</dbReference>
<dbReference type="PROSITE" id="PS51375">
    <property type="entry name" value="PPR"/>
    <property type="match status" value="7"/>
</dbReference>
<proteinExistence type="evidence at transcript level"/>
<keyword id="KW-0496">Mitochondrion</keyword>
<keyword id="KW-1185">Reference proteome</keyword>
<keyword id="KW-0677">Repeat</keyword>
<keyword id="KW-0809">Transit peptide</keyword>
<protein>
    <recommendedName>
        <fullName>Pentatricopeptide repeat-containing protein At4g21705, mitochondrial</fullName>
    </recommendedName>
</protein>
<reference key="1">
    <citation type="journal article" date="1999" name="Nature">
        <title>Sequence and analysis of chromosome 4 of the plant Arabidopsis thaliana.</title>
        <authorList>
            <person name="Mayer K.F.X."/>
            <person name="Schueller C."/>
            <person name="Wambutt R."/>
            <person name="Murphy G."/>
            <person name="Volckaert G."/>
            <person name="Pohl T."/>
            <person name="Duesterhoeft A."/>
            <person name="Stiekema W."/>
            <person name="Entian K.-D."/>
            <person name="Terryn N."/>
            <person name="Harris B."/>
            <person name="Ansorge W."/>
            <person name="Brandt P."/>
            <person name="Grivell L.A."/>
            <person name="Rieger M."/>
            <person name="Weichselgartner M."/>
            <person name="de Simone V."/>
            <person name="Obermaier B."/>
            <person name="Mache R."/>
            <person name="Mueller M."/>
            <person name="Kreis M."/>
            <person name="Delseny M."/>
            <person name="Puigdomenech P."/>
            <person name="Watson M."/>
            <person name="Schmidtheini T."/>
            <person name="Reichert B."/>
            <person name="Portetelle D."/>
            <person name="Perez-Alonso M."/>
            <person name="Boutry M."/>
            <person name="Bancroft I."/>
            <person name="Vos P."/>
            <person name="Hoheisel J."/>
            <person name="Zimmermann W."/>
            <person name="Wedler H."/>
            <person name="Ridley P."/>
            <person name="Langham S.-A."/>
            <person name="McCullagh B."/>
            <person name="Bilham L."/>
            <person name="Robben J."/>
            <person name="van der Schueren J."/>
            <person name="Grymonprez B."/>
            <person name="Chuang Y.-J."/>
            <person name="Vandenbussche F."/>
            <person name="Braeken M."/>
            <person name="Weltjens I."/>
            <person name="Voet M."/>
            <person name="Bastiaens I."/>
            <person name="Aert R."/>
            <person name="Defoor E."/>
            <person name="Weitzenegger T."/>
            <person name="Bothe G."/>
            <person name="Ramsperger U."/>
            <person name="Hilbert H."/>
            <person name="Braun M."/>
            <person name="Holzer E."/>
            <person name="Brandt A."/>
            <person name="Peters S."/>
            <person name="van Staveren M."/>
            <person name="Dirkse W."/>
            <person name="Mooijman P."/>
            <person name="Klein Lankhorst R."/>
            <person name="Rose M."/>
            <person name="Hauf J."/>
            <person name="Koetter P."/>
            <person name="Berneiser S."/>
            <person name="Hempel S."/>
            <person name="Feldpausch M."/>
            <person name="Lamberth S."/>
            <person name="Van den Daele H."/>
            <person name="De Keyser A."/>
            <person name="Buysshaert C."/>
            <person name="Gielen J."/>
            <person name="Villarroel R."/>
            <person name="De Clercq R."/>
            <person name="van Montagu M."/>
            <person name="Rogers J."/>
            <person name="Cronin A."/>
            <person name="Quail M.A."/>
            <person name="Bray-Allen S."/>
            <person name="Clark L."/>
            <person name="Doggett J."/>
            <person name="Hall S."/>
            <person name="Kay M."/>
            <person name="Lennard N."/>
            <person name="McLay K."/>
            <person name="Mayes R."/>
            <person name="Pettett A."/>
            <person name="Rajandream M.A."/>
            <person name="Lyne M."/>
            <person name="Benes V."/>
            <person name="Rechmann S."/>
            <person name="Borkova D."/>
            <person name="Bloecker H."/>
            <person name="Scharfe M."/>
            <person name="Grimm M."/>
            <person name="Loehnert T.-H."/>
            <person name="Dose S."/>
            <person name="de Haan M."/>
            <person name="Maarse A.C."/>
            <person name="Schaefer M."/>
            <person name="Mueller-Auer S."/>
            <person name="Gabel C."/>
            <person name="Fuchs M."/>
            <person name="Fartmann B."/>
            <person name="Granderath K."/>
            <person name="Dauner D."/>
            <person name="Herzl A."/>
            <person name="Neumann S."/>
            <person name="Argiriou A."/>
            <person name="Vitale D."/>
            <person name="Liguori R."/>
            <person name="Piravandi E."/>
            <person name="Massenet O."/>
            <person name="Quigley F."/>
            <person name="Clabauld G."/>
            <person name="Muendlein A."/>
            <person name="Felber R."/>
            <person name="Schnabl S."/>
            <person name="Hiller R."/>
            <person name="Schmidt W."/>
            <person name="Lecharny A."/>
            <person name="Aubourg S."/>
            <person name="Chefdor F."/>
            <person name="Cooke R."/>
            <person name="Berger C."/>
            <person name="Monfort A."/>
            <person name="Casacuberta E."/>
            <person name="Gibbons T."/>
            <person name="Weber N."/>
            <person name="Vandenbol M."/>
            <person name="Bargues M."/>
            <person name="Terol J."/>
            <person name="Torres A."/>
            <person name="Perez-Perez A."/>
            <person name="Purnelle B."/>
            <person name="Bent E."/>
            <person name="Johnson S."/>
            <person name="Tacon D."/>
            <person name="Jesse T."/>
            <person name="Heijnen L."/>
            <person name="Schwarz S."/>
            <person name="Scholler P."/>
            <person name="Heber S."/>
            <person name="Francs P."/>
            <person name="Bielke C."/>
            <person name="Frishman D."/>
            <person name="Haase D."/>
            <person name="Lemcke K."/>
            <person name="Mewes H.-W."/>
            <person name="Stocker S."/>
            <person name="Zaccaria P."/>
            <person name="Bevan M."/>
            <person name="Wilson R.K."/>
            <person name="de la Bastide M."/>
            <person name="Habermann K."/>
            <person name="Parnell L."/>
            <person name="Dedhia N."/>
            <person name="Gnoj L."/>
            <person name="Schutz K."/>
            <person name="Huang E."/>
            <person name="Spiegel L."/>
            <person name="Sekhon M."/>
            <person name="Murray J."/>
            <person name="Sheet P."/>
            <person name="Cordes M."/>
            <person name="Abu-Threideh J."/>
            <person name="Stoneking T."/>
            <person name="Kalicki J."/>
            <person name="Graves T."/>
            <person name="Harmon G."/>
            <person name="Edwards J."/>
            <person name="Latreille P."/>
            <person name="Courtney L."/>
            <person name="Cloud J."/>
            <person name="Abbott A."/>
            <person name="Scott K."/>
            <person name="Johnson D."/>
            <person name="Minx P."/>
            <person name="Bentley D."/>
            <person name="Fulton B."/>
            <person name="Miller N."/>
            <person name="Greco T."/>
            <person name="Kemp K."/>
            <person name="Kramer J."/>
            <person name="Fulton L."/>
            <person name="Mardis E."/>
            <person name="Dante M."/>
            <person name="Pepin K."/>
            <person name="Hillier L.W."/>
            <person name="Nelson J."/>
            <person name="Spieth J."/>
            <person name="Ryan E."/>
            <person name="Andrews S."/>
            <person name="Geisel C."/>
            <person name="Layman D."/>
            <person name="Du H."/>
            <person name="Ali J."/>
            <person name="Berghoff A."/>
            <person name="Jones K."/>
            <person name="Drone K."/>
            <person name="Cotton M."/>
            <person name="Joshu C."/>
            <person name="Antonoiu B."/>
            <person name="Zidanic M."/>
            <person name="Strong C."/>
            <person name="Sun H."/>
            <person name="Lamar B."/>
            <person name="Yordan C."/>
            <person name="Ma P."/>
            <person name="Zhong J."/>
            <person name="Preston R."/>
            <person name="Vil D."/>
            <person name="Shekher M."/>
            <person name="Matero A."/>
            <person name="Shah R."/>
            <person name="Swaby I.K."/>
            <person name="O'Shaughnessy A."/>
            <person name="Rodriguez M."/>
            <person name="Hoffman J."/>
            <person name="Till S."/>
            <person name="Granat S."/>
            <person name="Shohdy N."/>
            <person name="Hasegawa A."/>
            <person name="Hameed A."/>
            <person name="Lodhi M."/>
            <person name="Johnson A."/>
            <person name="Chen E."/>
            <person name="Marra M.A."/>
            <person name="Martienssen R."/>
            <person name="McCombie W.R."/>
        </authorList>
    </citation>
    <scope>NUCLEOTIDE SEQUENCE [LARGE SCALE GENOMIC DNA]</scope>
    <source>
        <strain>cv. Columbia</strain>
    </source>
</reference>
<reference key="2">
    <citation type="journal article" date="2017" name="Plant J.">
        <title>Araport11: a complete reannotation of the Arabidopsis thaliana reference genome.</title>
        <authorList>
            <person name="Cheng C.Y."/>
            <person name="Krishnakumar V."/>
            <person name="Chan A.P."/>
            <person name="Thibaud-Nissen F."/>
            <person name="Schobel S."/>
            <person name="Town C.D."/>
        </authorList>
    </citation>
    <scope>GENOME REANNOTATION</scope>
    <source>
        <strain>cv. Columbia</strain>
    </source>
</reference>
<reference key="3">
    <citation type="journal article" date="2003" name="Science">
        <title>Empirical analysis of transcriptional activity in the Arabidopsis genome.</title>
        <authorList>
            <person name="Yamada K."/>
            <person name="Lim J."/>
            <person name="Dale J.M."/>
            <person name="Chen H."/>
            <person name="Shinn P."/>
            <person name="Palm C.J."/>
            <person name="Southwick A.M."/>
            <person name="Wu H.C."/>
            <person name="Kim C.J."/>
            <person name="Nguyen M."/>
            <person name="Pham P.K."/>
            <person name="Cheuk R.F."/>
            <person name="Karlin-Newmann G."/>
            <person name="Liu S.X."/>
            <person name="Lam B."/>
            <person name="Sakano H."/>
            <person name="Wu T."/>
            <person name="Yu G."/>
            <person name="Miranda M."/>
            <person name="Quach H.L."/>
            <person name="Tripp M."/>
            <person name="Chang C.H."/>
            <person name="Lee J.M."/>
            <person name="Toriumi M.J."/>
            <person name="Chan M.M."/>
            <person name="Tang C.C."/>
            <person name="Onodera C.S."/>
            <person name="Deng J.M."/>
            <person name="Akiyama K."/>
            <person name="Ansari Y."/>
            <person name="Arakawa T."/>
            <person name="Banh J."/>
            <person name="Banno F."/>
            <person name="Bowser L."/>
            <person name="Brooks S.Y."/>
            <person name="Carninci P."/>
            <person name="Chao Q."/>
            <person name="Choy N."/>
            <person name="Enju A."/>
            <person name="Goldsmith A.D."/>
            <person name="Gurjal M."/>
            <person name="Hansen N.F."/>
            <person name="Hayashizaki Y."/>
            <person name="Johnson-Hopson C."/>
            <person name="Hsuan V.W."/>
            <person name="Iida K."/>
            <person name="Karnes M."/>
            <person name="Khan S."/>
            <person name="Koesema E."/>
            <person name="Ishida J."/>
            <person name="Jiang P.X."/>
            <person name="Jones T."/>
            <person name="Kawai J."/>
            <person name="Kamiya A."/>
            <person name="Meyers C."/>
            <person name="Nakajima M."/>
            <person name="Narusaka M."/>
            <person name="Seki M."/>
            <person name="Sakurai T."/>
            <person name="Satou M."/>
            <person name="Tamse R."/>
            <person name="Vaysberg M."/>
            <person name="Wallender E.K."/>
            <person name="Wong C."/>
            <person name="Yamamura Y."/>
            <person name="Yuan S."/>
            <person name="Shinozaki K."/>
            <person name="Davis R.W."/>
            <person name="Theologis A."/>
            <person name="Ecker J.R."/>
        </authorList>
    </citation>
    <scope>NUCLEOTIDE SEQUENCE [LARGE SCALE MRNA]</scope>
    <source>
        <strain>cv. Columbia</strain>
    </source>
</reference>
<reference key="4">
    <citation type="journal article" date="2004" name="Plant Cell">
        <title>Genome-wide analysis of Arabidopsis pentatricopeptide repeat proteins reveals their essential role in organelle biogenesis.</title>
        <authorList>
            <person name="Lurin C."/>
            <person name="Andres C."/>
            <person name="Aubourg S."/>
            <person name="Bellaoui M."/>
            <person name="Bitton F."/>
            <person name="Bruyere C."/>
            <person name="Caboche M."/>
            <person name="Debast C."/>
            <person name="Gualberto J."/>
            <person name="Hoffmann B."/>
            <person name="Lecharny A."/>
            <person name="Le Ret M."/>
            <person name="Martin-Magniette M.-L."/>
            <person name="Mireau H."/>
            <person name="Peeters N."/>
            <person name="Renou J.-P."/>
            <person name="Szurek B."/>
            <person name="Taconnat L."/>
            <person name="Small I."/>
        </authorList>
    </citation>
    <scope>GENE FAMILY</scope>
</reference>
<gene>
    <name type="ordered locus">At4g21705</name>
    <name type="ORF">F17L22.2</name>
</gene>
<sequence length="492" mass="56577">MNILRRIPANLIASRYYYTNRVKKTTLYSKISPLGDPKSSVYPELQNWVQCGKKVSVAELIRIVHDLRRRKRFLHALEVSKWMNETGVCVFSPTEHAVHLDLIGRVYGFVTAEEYFENLKEQYKNDKTYGALLNCYVRQQNVEKSLLHFEKMKEMGFVTSSLTYNNIMCLYTNIGQHEKVPKVLEEMKEENVAPDNYSYRICINAFGAMYDLERIGGTLRDMERRQDITMDWNTYAVAAKFYIDGGDCDRAVELLKMSENRLEKKDGEGYNHLITLYARLGKKIEVLRLWDLEKDVCKRRINQDYLTVLQSLVKIDALVEAEEVLTEWKSSGNCYDFRVPNTVIRGYIGKSMEEKAEAMLEDLARRGKATTPESWELVATAYAEKGTLENAFKCMKTALGVEVGSRKWRPGLTLVTSVLSWVGDEGSLKEVESFVASLRNCIGVNKQMYHALVKADIREGGRNIDTLLQRMKDDKIEIDEETTVILSTRSPC</sequence>
<organism>
    <name type="scientific">Arabidopsis thaliana</name>
    <name type="common">Mouse-ear cress</name>
    <dbReference type="NCBI Taxonomy" id="3702"/>
    <lineage>
        <taxon>Eukaryota</taxon>
        <taxon>Viridiplantae</taxon>
        <taxon>Streptophyta</taxon>
        <taxon>Embryophyta</taxon>
        <taxon>Tracheophyta</taxon>
        <taxon>Spermatophyta</taxon>
        <taxon>Magnoliopsida</taxon>
        <taxon>eudicotyledons</taxon>
        <taxon>Gunneridae</taxon>
        <taxon>Pentapetalae</taxon>
        <taxon>rosids</taxon>
        <taxon>malvids</taxon>
        <taxon>Brassicales</taxon>
        <taxon>Brassicaceae</taxon>
        <taxon>Camelineae</taxon>
        <taxon>Arabidopsis</taxon>
    </lineage>
</organism>
<name>PP334_ARATH</name>
<feature type="transit peptide" description="Mitochondrion" evidence="1">
    <location>
        <begin position="1"/>
        <end position="17"/>
    </location>
</feature>
<feature type="chain" id="PRO_0000363451" description="Pentatricopeptide repeat-containing protein At4g21705, mitochondrial">
    <location>
        <begin position="18"/>
        <end position="492"/>
    </location>
</feature>
<feature type="repeat" description="PPR 1">
    <location>
        <begin position="125"/>
        <end position="159"/>
    </location>
</feature>
<feature type="repeat" description="PPR 2">
    <location>
        <begin position="160"/>
        <end position="194"/>
    </location>
</feature>
<feature type="repeat" description="PPR 3">
    <location>
        <begin position="195"/>
        <end position="225"/>
    </location>
</feature>
<feature type="repeat" description="PPR 4">
    <location>
        <begin position="231"/>
        <end position="261"/>
    </location>
</feature>
<feature type="repeat" description="PPR 5">
    <location>
        <begin position="266"/>
        <end position="296"/>
    </location>
</feature>
<feature type="repeat" description="PPR 6">
    <location>
        <begin position="301"/>
        <end position="335"/>
    </location>
</feature>
<feature type="repeat" description="PPR 7">
    <location>
        <begin position="336"/>
        <end position="370"/>
    </location>
</feature>
<feature type="repeat" description="PPR 8">
    <location>
        <begin position="371"/>
        <end position="405"/>
    </location>
</feature>